<reference key="1">
    <citation type="journal article" date="1999" name="Mol. Microbiol.">
        <title>The DNA binding protein Tfx from Methanobacterium thermoautotrophicum: structure, DNA binding properties and transcriptional regulation.</title>
        <authorList>
            <person name="Hochheimer A."/>
            <person name="Hedderich R."/>
            <person name="Thauer R.K."/>
        </authorList>
    </citation>
    <scope>NUCLEOTIDE SEQUENCE [GENOMIC DNA]</scope>
    <scope>FUNCTION</scope>
    <source>
        <strain>ATCC BAA-927 / DSM 2133 / JCM 14651 / NBRC 100331 / OCM 82 / Marburg</strain>
    </source>
</reference>
<reference key="2">
    <citation type="journal article" date="2010" name="J. Bacteriol.">
        <title>Complete genome sequence of Methanothermobacter marburgensis, a methanoarchaeon model organism.</title>
        <authorList>
            <person name="Liesegang H."/>
            <person name="Kaster A.K."/>
            <person name="Wiezer A."/>
            <person name="Goenrich M."/>
            <person name="Wollherr A."/>
            <person name="Seedorf H."/>
            <person name="Gottschalk G."/>
            <person name="Thauer R.K."/>
        </authorList>
    </citation>
    <scope>NUCLEOTIDE SEQUENCE [LARGE SCALE GENOMIC DNA]</scope>
    <source>
        <strain>ATCC BAA-927 / DSM 2133 / JCM 14651 / NBRC 100331 / OCM 82 / Marburg</strain>
    </source>
</reference>
<comment type="function">
    <text evidence="2">Transcriptional activator of the fmdECB operon.</text>
</comment>
<comment type="similarity">
    <text evidence="1">Belongs to the Tfx family.</text>
</comment>
<comment type="sequence caution" evidence="3">
    <conflict type="erroneous initiation">
        <sequence resource="EMBL-CDS" id="ADL58892"/>
    </conflict>
    <text>Truncated N-terminus.</text>
</comment>
<dbReference type="EMBL" id="AJ009686">
    <property type="protein sequence ID" value="CAA08778.1"/>
    <property type="molecule type" value="Genomic_DNA"/>
</dbReference>
<dbReference type="EMBL" id="CP001710">
    <property type="protein sequence ID" value="ADL58892.1"/>
    <property type="status" value="ALT_INIT"/>
    <property type="molecule type" value="Genomic_DNA"/>
</dbReference>
<dbReference type="RefSeq" id="WP_074359241.1">
    <property type="nucleotide sequence ID" value="NC_014408.1"/>
</dbReference>
<dbReference type="BMRB" id="P56811"/>
<dbReference type="SMR" id="P56811"/>
<dbReference type="STRING" id="79929.MTBMA_c13040"/>
<dbReference type="PaxDb" id="79929-MTBMA_c13040"/>
<dbReference type="GeneID" id="9705012"/>
<dbReference type="KEGG" id="mmg:MTBMA_c13040"/>
<dbReference type="HOGENOM" id="CLU_125807_0_1_2"/>
<dbReference type="OrthoDB" id="17771at2157"/>
<dbReference type="Proteomes" id="UP000000345">
    <property type="component" value="Chromosome"/>
</dbReference>
<dbReference type="GO" id="GO:0003677">
    <property type="term" value="F:DNA binding"/>
    <property type="evidence" value="ECO:0007669"/>
    <property type="project" value="UniProtKB-KW"/>
</dbReference>
<dbReference type="GO" id="GO:0003700">
    <property type="term" value="F:DNA-binding transcription factor activity"/>
    <property type="evidence" value="ECO:0007669"/>
    <property type="project" value="UniProtKB-UniRule"/>
</dbReference>
<dbReference type="GO" id="GO:0006352">
    <property type="term" value="P:DNA-templated transcription initiation"/>
    <property type="evidence" value="ECO:0007669"/>
    <property type="project" value="InterPro"/>
</dbReference>
<dbReference type="Gene3D" id="3.30.1190.10">
    <property type="entry name" value="DNA-binding protein Tfx superfamily, archaea"/>
    <property type="match status" value="1"/>
</dbReference>
<dbReference type="HAMAP" id="MF_00620">
    <property type="entry name" value="HTH_type_Tfx"/>
    <property type="match status" value="1"/>
</dbReference>
<dbReference type="InterPro" id="IPR007630">
    <property type="entry name" value="RNA_pol_sigma70_r4"/>
</dbReference>
<dbReference type="InterPro" id="IPR029291">
    <property type="entry name" value="Tfx_C"/>
</dbReference>
<dbReference type="InterPro" id="IPR004645">
    <property type="entry name" value="Tfx_DNA-bd_arc"/>
</dbReference>
<dbReference type="InterPro" id="IPR018384">
    <property type="entry name" value="Tfx_DNA-bd_euryarc"/>
</dbReference>
<dbReference type="InterPro" id="IPR036657">
    <property type="entry name" value="Tfx_DNA-bd_sf_arc"/>
</dbReference>
<dbReference type="NCBIfam" id="TIGR00721">
    <property type="entry name" value="tfx"/>
    <property type="match status" value="1"/>
</dbReference>
<dbReference type="Pfam" id="PF04545">
    <property type="entry name" value="Sigma70_r4"/>
    <property type="match status" value="1"/>
</dbReference>
<dbReference type="Pfam" id="PF14601">
    <property type="entry name" value="TFX_C"/>
    <property type="match status" value="1"/>
</dbReference>
<dbReference type="PIRSF" id="PIRSF004932">
    <property type="entry name" value="DNA_bind_Tfx"/>
    <property type="match status" value="1"/>
</dbReference>
<dbReference type="SUPFAM" id="SSF89915">
    <property type="entry name" value="DNA-binding protein Tfx"/>
    <property type="match status" value="1"/>
</dbReference>
<evidence type="ECO:0000255" key="1">
    <source>
        <dbReference type="HAMAP-Rule" id="MF_00620"/>
    </source>
</evidence>
<evidence type="ECO:0000269" key="2">
    <source>
    </source>
</evidence>
<evidence type="ECO:0000305" key="3"/>
<organism>
    <name type="scientific">Methanothermobacter marburgensis (strain ATCC BAA-927 / DSM 2133 / JCM 14651 / NBRC 100331 / OCM 82 / Marburg)</name>
    <name type="common">Methanobacterium thermoautotrophicum</name>
    <dbReference type="NCBI Taxonomy" id="79929"/>
    <lineage>
        <taxon>Archaea</taxon>
        <taxon>Methanobacteriati</taxon>
        <taxon>Methanobacteriota</taxon>
        <taxon>Methanomada group</taxon>
        <taxon>Methanobacteria</taxon>
        <taxon>Methanobacteriales</taxon>
        <taxon>Methanobacteriaceae</taxon>
        <taxon>Methanothermobacter</taxon>
    </lineage>
</organism>
<gene>
    <name type="primary">tfx</name>
    <name type="ordered locus">MTBMA_c13040</name>
</gene>
<proteinExistence type="inferred from homology"/>
<protein>
    <recommendedName>
        <fullName>DNA-binding protein Tfx</fullName>
    </recommendedName>
</protein>
<sequence>MSKKTFLTERQKTVLEMRERGWSQKKIARELKTTRQNVSAIERKAMENIEKSRNTLDFVKFLKSPVRILCRRGDTLDEIIKRLLEESNKEGIHVIHDSITLAFLIREKASHRIVHRVVKSDFEIGVTRDGEIIVDLNS</sequence>
<feature type="chain" id="PRO_0000144168" description="DNA-binding protein Tfx">
    <location>
        <begin position="1"/>
        <end position="138"/>
    </location>
</feature>
<keyword id="KW-0010">Activator</keyword>
<keyword id="KW-0238">DNA-binding</keyword>
<keyword id="KW-0804">Transcription</keyword>
<keyword id="KW-0805">Transcription regulation</keyword>
<accession>P56811</accession>
<accession>D9PXE4</accession>
<name>TFX_METTM</name>